<keyword id="KW-0963">Cytoplasm</keyword>
<keyword id="KW-0489">Methyltransferase</keyword>
<keyword id="KW-1185">Reference proteome</keyword>
<keyword id="KW-0949">S-adenosyl-L-methionine</keyword>
<keyword id="KW-0808">Transferase</keyword>
<keyword id="KW-0819">tRNA processing</keyword>
<proteinExistence type="inferred from homology"/>
<feature type="chain" id="PRO_1000198564" description="tRNA (guanine-N(1)-)-methyltransferase">
    <location>
        <begin position="1"/>
        <end position="233"/>
    </location>
</feature>
<feature type="binding site" evidence="1">
    <location>
        <position position="113"/>
    </location>
    <ligand>
        <name>S-adenosyl-L-methionine</name>
        <dbReference type="ChEBI" id="CHEBI:59789"/>
    </ligand>
</feature>
<feature type="binding site" evidence="1">
    <location>
        <begin position="133"/>
        <end position="138"/>
    </location>
    <ligand>
        <name>S-adenosyl-L-methionine</name>
        <dbReference type="ChEBI" id="CHEBI:59789"/>
    </ligand>
</feature>
<protein>
    <recommendedName>
        <fullName evidence="1">tRNA (guanine-N(1)-)-methyltransferase</fullName>
        <ecNumber evidence="1">2.1.1.228</ecNumber>
    </recommendedName>
    <alternativeName>
        <fullName evidence="1">M1G-methyltransferase</fullName>
    </alternativeName>
    <alternativeName>
        <fullName evidence="1">tRNA [GM37] methyltransferase</fullName>
    </alternativeName>
</protein>
<name>TRMD_RUMCH</name>
<reference key="1">
    <citation type="submission" date="2009-01" db="EMBL/GenBank/DDBJ databases">
        <title>Complete sequence of Clostridium cellulolyticum H10.</title>
        <authorList>
            <consortium name="US DOE Joint Genome Institute"/>
            <person name="Lucas S."/>
            <person name="Copeland A."/>
            <person name="Lapidus A."/>
            <person name="Glavina del Rio T."/>
            <person name="Dalin E."/>
            <person name="Tice H."/>
            <person name="Bruce D."/>
            <person name="Goodwin L."/>
            <person name="Pitluck S."/>
            <person name="Chertkov O."/>
            <person name="Saunders E."/>
            <person name="Brettin T."/>
            <person name="Detter J.C."/>
            <person name="Han C."/>
            <person name="Larimer F."/>
            <person name="Land M."/>
            <person name="Hauser L."/>
            <person name="Kyrpides N."/>
            <person name="Ivanova N."/>
            <person name="Zhou J."/>
            <person name="Richardson P."/>
        </authorList>
    </citation>
    <scope>NUCLEOTIDE SEQUENCE [LARGE SCALE GENOMIC DNA]</scope>
    <source>
        <strain>ATCC 35319 / DSM 5812 / JCM 6584 / H10</strain>
    </source>
</reference>
<comment type="function">
    <text evidence="1">Specifically methylates guanosine-37 in various tRNAs.</text>
</comment>
<comment type="catalytic activity">
    <reaction evidence="1">
        <text>guanosine(37) in tRNA + S-adenosyl-L-methionine = N(1)-methylguanosine(37) in tRNA + S-adenosyl-L-homocysteine + H(+)</text>
        <dbReference type="Rhea" id="RHEA:36899"/>
        <dbReference type="Rhea" id="RHEA-COMP:10145"/>
        <dbReference type="Rhea" id="RHEA-COMP:10147"/>
        <dbReference type="ChEBI" id="CHEBI:15378"/>
        <dbReference type="ChEBI" id="CHEBI:57856"/>
        <dbReference type="ChEBI" id="CHEBI:59789"/>
        <dbReference type="ChEBI" id="CHEBI:73542"/>
        <dbReference type="ChEBI" id="CHEBI:74269"/>
        <dbReference type="EC" id="2.1.1.228"/>
    </reaction>
</comment>
<comment type="subunit">
    <text evidence="1">Homodimer.</text>
</comment>
<comment type="subcellular location">
    <subcellularLocation>
        <location evidence="1">Cytoplasm</location>
    </subcellularLocation>
</comment>
<comment type="similarity">
    <text evidence="1">Belongs to the RNA methyltransferase TrmD family.</text>
</comment>
<organism>
    <name type="scientific">Ruminiclostridium cellulolyticum (strain ATCC 35319 / DSM 5812 / JCM 6584 / H10)</name>
    <name type="common">Clostridium cellulolyticum</name>
    <dbReference type="NCBI Taxonomy" id="394503"/>
    <lineage>
        <taxon>Bacteria</taxon>
        <taxon>Bacillati</taxon>
        <taxon>Bacillota</taxon>
        <taxon>Clostridia</taxon>
        <taxon>Eubacteriales</taxon>
        <taxon>Oscillospiraceae</taxon>
        <taxon>Ruminiclostridium</taxon>
    </lineage>
</organism>
<gene>
    <name evidence="1" type="primary">trmD</name>
    <name type="ordered locus">Ccel_0713</name>
</gene>
<sequence>MKFDVLTLFPELFNTVMGESIIGRAQKNRLVEVNAVNIRDYSKDKHKKVDDYPFGGGNGMVMMCQPVIDAYKAISEGMEQKPKVIYMSPQGKVLTQEMAKELSKQEHLILLCGHYEGIDERIIEEIIDEEISIGDYVLTGGELPAMVLIDCVSRLIPGVLSTEGSFSDESHFNGLLEYPQYTRPADYNGNKVPEVLLSGHHANIEKWRMQQSLDRTRDKRPDLFNKLPNKNLL</sequence>
<accession>B8I7T5</accession>
<evidence type="ECO:0000255" key="1">
    <source>
        <dbReference type="HAMAP-Rule" id="MF_00605"/>
    </source>
</evidence>
<dbReference type="EC" id="2.1.1.228" evidence="1"/>
<dbReference type="EMBL" id="CP001348">
    <property type="protein sequence ID" value="ACL75092.1"/>
    <property type="molecule type" value="Genomic_DNA"/>
</dbReference>
<dbReference type="RefSeq" id="WP_015924259.1">
    <property type="nucleotide sequence ID" value="NC_011898.1"/>
</dbReference>
<dbReference type="SMR" id="B8I7T5"/>
<dbReference type="STRING" id="394503.Ccel_0713"/>
<dbReference type="KEGG" id="cce:Ccel_0713"/>
<dbReference type="eggNOG" id="COG0336">
    <property type="taxonomic scope" value="Bacteria"/>
</dbReference>
<dbReference type="HOGENOM" id="CLU_047363_0_1_9"/>
<dbReference type="OrthoDB" id="9807416at2"/>
<dbReference type="Proteomes" id="UP000001349">
    <property type="component" value="Chromosome"/>
</dbReference>
<dbReference type="GO" id="GO:0005829">
    <property type="term" value="C:cytosol"/>
    <property type="evidence" value="ECO:0007669"/>
    <property type="project" value="TreeGrafter"/>
</dbReference>
<dbReference type="GO" id="GO:0052906">
    <property type="term" value="F:tRNA (guanine(37)-N1)-methyltransferase activity"/>
    <property type="evidence" value="ECO:0007669"/>
    <property type="project" value="UniProtKB-UniRule"/>
</dbReference>
<dbReference type="GO" id="GO:0002939">
    <property type="term" value="P:tRNA N1-guanine methylation"/>
    <property type="evidence" value="ECO:0007669"/>
    <property type="project" value="TreeGrafter"/>
</dbReference>
<dbReference type="CDD" id="cd18080">
    <property type="entry name" value="TrmD-like"/>
    <property type="match status" value="1"/>
</dbReference>
<dbReference type="FunFam" id="1.10.1270.20:FF:000001">
    <property type="entry name" value="tRNA (guanine-N(1)-)-methyltransferase"/>
    <property type="match status" value="1"/>
</dbReference>
<dbReference type="FunFam" id="3.40.1280.10:FF:000001">
    <property type="entry name" value="tRNA (guanine-N(1)-)-methyltransferase"/>
    <property type="match status" value="1"/>
</dbReference>
<dbReference type="Gene3D" id="3.40.1280.10">
    <property type="match status" value="1"/>
</dbReference>
<dbReference type="Gene3D" id="1.10.1270.20">
    <property type="entry name" value="tRNA(m1g37)methyltransferase, domain 2"/>
    <property type="match status" value="1"/>
</dbReference>
<dbReference type="HAMAP" id="MF_00605">
    <property type="entry name" value="TrmD"/>
    <property type="match status" value="1"/>
</dbReference>
<dbReference type="InterPro" id="IPR029028">
    <property type="entry name" value="Alpha/beta_knot_MTases"/>
</dbReference>
<dbReference type="InterPro" id="IPR023148">
    <property type="entry name" value="tRNA_m1G_MeTrfase_C_sf"/>
</dbReference>
<dbReference type="InterPro" id="IPR002649">
    <property type="entry name" value="tRNA_m1G_MeTrfase_TrmD"/>
</dbReference>
<dbReference type="InterPro" id="IPR029026">
    <property type="entry name" value="tRNA_m1G_MTases_N"/>
</dbReference>
<dbReference type="InterPro" id="IPR016009">
    <property type="entry name" value="tRNA_MeTrfase_TRMD/TRM10"/>
</dbReference>
<dbReference type="NCBIfam" id="NF000648">
    <property type="entry name" value="PRK00026.1"/>
    <property type="match status" value="1"/>
</dbReference>
<dbReference type="NCBIfam" id="TIGR00088">
    <property type="entry name" value="trmD"/>
    <property type="match status" value="1"/>
</dbReference>
<dbReference type="PANTHER" id="PTHR46417">
    <property type="entry name" value="TRNA (GUANINE-N(1)-)-METHYLTRANSFERASE"/>
    <property type="match status" value="1"/>
</dbReference>
<dbReference type="PANTHER" id="PTHR46417:SF1">
    <property type="entry name" value="TRNA (GUANINE-N(1)-)-METHYLTRANSFERASE"/>
    <property type="match status" value="1"/>
</dbReference>
<dbReference type="Pfam" id="PF01746">
    <property type="entry name" value="tRNA_m1G_MT"/>
    <property type="match status" value="1"/>
</dbReference>
<dbReference type="PIRSF" id="PIRSF000386">
    <property type="entry name" value="tRNA_mtase"/>
    <property type="match status" value="1"/>
</dbReference>
<dbReference type="SUPFAM" id="SSF75217">
    <property type="entry name" value="alpha/beta knot"/>
    <property type="match status" value="1"/>
</dbReference>